<reference key="1">
    <citation type="journal article" date="2005" name="Proc. Natl. Acad. Sci. U.S.A.">
        <title>Comparison of the complete genome sequences of Pseudomonas syringae pv. syringae B728a and pv. tomato DC3000.</title>
        <authorList>
            <person name="Feil H."/>
            <person name="Feil W.S."/>
            <person name="Chain P."/>
            <person name="Larimer F."/>
            <person name="Dibartolo G."/>
            <person name="Copeland A."/>
            <person name="Lykidis A."/>
            <person name="Trong S."/>
            <person name="Nolan M."/>
            <person name="Goltsman E."/>
            <person name="Thiel J."/>
            <person name="Malfatti S."/>
            <person name="Loper J.E."/>
            <person name="Lapidus A."/>
            <person name="Detter J.C."/>
            <person name="Land M."/>
            <person name="Richardson P.M."/>
            <person name="Kyrpides N.C."/>
            <person name="Ivanova N."/>
            <person name="Lindow S.E."/>
        </authorList>
    </citation>
    <scope>NUCLEOTIDE SEQUENCE [LARGE SCALE GENOMIC DNA]</scope>
    <source>
        <strain>B728a</strain>
    </source>
</reference>
<name>RL16_PSEU2</name>
<sequence length="137" mass="15430">MLQPKRTKFRKQMTGHNRGLALRGSKVSFGEFALKSVARGRLTARQIESARRALTRHVKRGGKIWIRVFPDKPVTKKPLEVRMGKGKGNVEYWVAQIQPGKVLYEIEGVTEELAREAFALAAAKLPLATSFVKRTVM</sequence>
<proteinExistence type="inferred from homology"/>
<accession>Q4ZMQ1</accession>
<comment type="function">
    <text evidence="1">Binds 23S rRNA and is also seen to make contacts with the A and possibly P site tRNAs.</text>
</comment>
<comment type="subunit">
    <text evidence="1">Part of the 50S ribosomal subunit.</text>
</comment>
<comment type="similarity">
    <text evidence="1">Belongs to the universal ribosomal protein uL16 family.</text>
</comment>
<protein>
    <recommendedName>
        <fullName evidence="1">Large ribosomal subunit protein uL16</fullName>
    </recommendedName>
    <alternativeName>
        <fullName evidence="2">50S ribosomal protein L16</fullName>
    </alternativeName>
</protein>
<dbReference type="EMBL" id="CP000075">
    <property type="protein sequence ID" value="AAY39571.1"/>
    <property type="molecule type" value="Genomic_DNA"/>
</dbReference>
<dbReference type="RefSeq" id="WP_002555482.1">
    <property type="nucleotide sequence ID" value="NC_007005.1"/>
</dbReference>
<dbReference type="RefSeq" id="YP_237609.1">
    <property type="nucleotide sequence ID" value="NC_007005.1"/>
</dbReference>
<dbReference type="SMR" id="Q4ZMQ1"/>
<dbReference type="STRING" id="205918.Psyr_4541"/>
<dbReference type="GeneID" id="96221023"/>
<dbReference type="KEGG" id="psb:Psyr_4541"/>
<dbReference type="PATRIC" id="fig|205918.7.peg.4680"/>
<dbReference type="eggNOG" id="COG0197">
    <property type="taxonomic scope" value="Bacteria"/>
</dbReference>
<dbReference type="HOGENOM" id="CLU_078858_2_1_6"/>
<dbReference type="OrthoDB" id="9802589at2"/>
<dbReference type="Proteomes" id="UP000000426">
    <property type="component" value="Chromosome"/>
</dbReference>
<dbReference type="GO" id="GO:0022625">
    <property type="term" value="C:cytosolic large ribosomal subunit"/>
    <property type="evidence" value="ECO:0007669"/>
    <property type="project" value="TreeGrafter"/>
</dbReference>
<dbReference type="GO" id="GO:0019843">
    <property type="term" value="F:rRNA binding"/>
    <property type="evidence" value="ECO:0007669"/>
    <property type="project" value="UniProtKB-UniRule"/>
</dbReference>
<dbReference type="GO" id="GO:0003735">
    <property type="term" value="F:structural constituent of ribosome"/>
    <property type="evidence" value="ECO:0007669"/>
    <property type="project" value="InterPro"/>
</dbReference>
<dbReference type="GO" id="GO:0000049">
    <property type="term" value="F:tRNA binding"/>
    <property type="evidence" value="ECO:0007669"/>
    <property type="project" value="UniProtKB-KW"/>
</dbReference>
<dbReference type="GO" id="GO:0006412">
    <property type="term" value="P:translation"/>
    <property type="evidence" value="ECO:0007669"/>
    <property type="project" value="UniProtKB-UniRule"/>
</dbReference>
<dbReference type="CDD" id="cd01433">
    <property type="entry name" value="Ribosomal_L16_L10e"/>
    <property type="match status" value="1"/>
</dbReference>
<dbReference type="FunFam" id="3.90.1170.10:FF:000001">
    <property type="entry name" value="50S ribosomal protein L16"/>
    <property type="match status" value="1"/>
</dbReference>
<dbReference type="Gene3D" id="3.90.1170.10">
    <property type="entry name" value="Ribosomal protein L10e/L16"/>
    <property type="match status" value="1"/>
</dbReference>
<dbReference type="HAMAP" id="MF_01342">
    <property type="entry name" value="Ribosomal_uL16"/>
    <property type="match status" value="1"/>
</dbReference>
<dbReference type="InterPro" id="IPR047873">
    <property type="entry name" value="Ribosomal_uL16"/>
</dbReference>
<dbReference type="InterPro" id="IPR000114">
    <property type="entry name" value="Ribosomal_uL16_bact-type"/>
</dbReference>
<dbReference type="InterPro" id="IPR020798">
    <property type="entry name" value="Ribosomal_uL16_CS"/>
</dbReference>
<dbReference type="InterPro" id="IPR016180">
    <property type="entry name" value="Ribosomal_uL16_dom"/>
</dbReference>
<dbReference type="InterPro" id="IPR036920">
    <property type="entry name" value="Ribosomal_uL16_sf"/>
</dbReference>
<dbReference type="NCBIfam" id="TIGR01164">
    <property type="entry name" value="rplP_bact"/>
    <property type="match status" value="1"/>
</dbReference>
<dbReference type="PANTHER" id="PTHR12220">
    <property type="entry name" value="50S/60S RIBOSOMAL PROTEIN L16"/>
    <property type="match status" value="1"/>
</dbReference>
<dbReference type="PANTHER" id="PTHR12220:SF13">
    <property type="entry name" value="LARGE RIBOSOMAL SUBUNIT PROTEIN UL16M"/>
    <property type="match status" value="1"/>
</dbReference>
<dbReference type="Pfam" id="PF00252">
    <property type="entry name" value="Ribosomal_L16"/>
    <property type="match status" value="1"/>
</dbReference>
<dbReference type="PRINTS" id="PR00060">
    <property type="entry name" value="RIBOSOMALL16"/>
</dbReference>
<dbReference type="SUPFAM" id="SSF54686">
    <property type="entry name" value="Ribosomal protein L16p/L10e"/>
    <property type="match status" value="1"/>
</dbReference>
<dbReference type="PROSITE" id="PS00586">
    <property type="entry name" value="RIBOSOMAL_L16_1"/>
    <property type="match status" value="1"/>
</dbReference>
<dbReference type="PROSITE" id="PS00701">
    <property type="entry name" value="RIBOSOMAL_L16_2"/>
    <property type="match status" value="1"/>
</dbReference>
<evidence type="ECO:0000255" key="1">
    <source>
        <dbReference type="HAMAP-Rule" id="MF_01342"/>
    </source>
</evidence>
<evidence type="ECO:0000305" key="2"/>
<organism>
    <name type="scientific">Pseudomonas syringae pv. syringae (strain B728a)</name>
    <dbReference type="NCBI Taxonomy" id="205918"/>
    <lineage>
        <taxon>Bacteria</taxon>
        <taxon>Pseudomonadati</taxon>
        <taxon>Pseudomonadota</taxon>
        <taxon>Gammaproteobacteria</taxon>
        <taxon>Pseudomonadales</taxon>
        <taxon>Pseudomonadaceae</taxon>
        <taxon>Pseudomonas</taxon>
        <taxon>Pseudomonas syringae</taxon>
    </lineage>
</organism>
<gene>
    <name evidence="1" type="primary">rplP</name>
    <name type="ordered locus">Psyr_4541</name>
</gene>
<keyword id="KW-0687">Ribonucleoprotein</keyword>
<keyword id="KW-0689">Ribosomal protein</keyword>
<keyword id="KW-0694">RNA-binding</keyword>
<keyword id="KW-0699">rRNA-binding</keyword>
<keyword id="KW-0820">tRNA-binding</keyword>
<feature type="chain" id="PRO_0000062177" description="Large ribosomal subunit protein uL16">
    <location>
        <begin position="1"/>
        <end position="137"/>
    </location>
</feature>